<feature type="chain" id="PRO_0000333119" description="Na(+)/H(+) antiporter NhaB">
    <location>
        <begin position="1"/>
        <end position="514"/>
    </location>
</feature>
<feature type="transmembrane region" description="Helical" evidence="1">
    <location>
        <begin position="23"/>
        <end position="43"/>
    </location>
</feature>
<feature type="transmembrane region" description="Helical" evidence="1">
    <location>
        <begin position="63"/>
        <end position="83"/>
    </location>
</feature>
<feature type="transmembrane region" description="Helical" evidence="1">
    <location>
        <begin position="97"/>
        <end position="117"/>
    </location>
</feature>
<feature type="transmembrane region" description="Helical" evidence="1">
    <location>
        <begin position="120"/>
        <end position="140"/>
    </location>
</feature>
<feature type="transmembrane region" description="Helical" evidence="1">
    <location>
        <begin position="144"/>
        <end position="164"/>
    </location>
</feature>
<feature type="transmembrane region" description="Helical" evidence="1">
    <location>
        <begin position="202"/>
        <end position="222"/>
    </location>
</feature>
<feature type="transmembrane region" description="Helical" evidence="1">
    <location>
        <begin position="238"/>
        <end position="258"/>
    </location>
</feature>
<feature type="transmembrane region" description="Helical" evidence="1">
    <location>
        <begin position="303"/>
        <end position="323"/>
    </location>
</feature>
<feature type="transmembrane region" description="Helical" evidence="1">
    <location>
        <begin position="357"/>
        <end position="377"/>
    </location>
</feature>
<feature type="transmembrane region" description="Helical" evidence="1">
    <location>
        <begin position="391"/>
        <end position="411"/>
    </location>
</feature>
<feature type="transmembrane region" description="Helical" evidence="1">
    <location>
        <begin position="447"/>
        <end position="467"/>
    </location>
</feature>
<feature type="transmembrane region" description="Helical" evidence="1">
    <location>
        <begin position="475"/>
        <end position="495"/>
    </location>
</feature>
<gene>
    <name evidence="1" type="primary">nhaB</name>
    <name type="ordered locus">SPAB_01411</name>
</gene>
<protein>
    <recommendedName>
        <fullName evidence="1">Na(+)/H(+) antiporter NhaB</fullName>
    </recommendedName>
    <alternativeName>
        <fullName evidence="1">Sodium/proton antiporter NhaB</fullName>
    </alternativeName>
</protein>
<organism>
    <name type="scientific">Salmonella paratyphi B (strain ATCC BAA-1250 / SPB7)</name>
    <dbReference type="NCBI Taxonomy" id="1016998"/>
    <lineage>
        <taxon>Bacteria</taxon>
        <taxon>Pseudomonadati</taxon>
        <taxon>Pseudomonadota</taxon>
        <taxon>Gammaproteobacteria</taxon>
        <taxon>Enterobacterales</taxon>
        <taxon>Enterobacteriaceae</taxon>
        <taxon>Salmonella</taxon>
    </lineage>
</organism>
<evidence type="ECO:0000255" key="1">
    <source>
        <dbReference type="HAMAP-Rule" id="MF_01599"/>
    </source>
</evidence>
<name>NHAB_SALPB</name>
<dbReference type="EMBL" id="CP000886">
    <property type="protein sequence ID" value="ABX66818.1"/>
    <property type="molecule type" value="Genomic_DNA"/>
</dbReference>
<dbReference type="RefSeq" id="WP_000406428.1">
    <property type="nucleotide sequence ID" value="NC_010102.1"/>
</dbReference>
<dbReference type="SMR" id="A9MVW2"/>
<dbReference type="KEGG" id="spq:SPAB_01411"/>
<dbReference type="PATRIC" id="fig|1016998.12.peg.1330"/>
<dbReference type="HOGENOM" id="CLU_041110_0_0_6"/>
<dbReference type="BioCyc" id="SENT1016998:SPAB_RS05780-MONOMER"/>
<dbReference type="Proteomes" id="UP000008556">
    <property type="component" value="Chromosome"/>
</dbReference>
<dbReference type="GO" id="GO:0005886">
    <property type="term" value="C:plasma membrane"/>
    <property type="evidence" value="ECO:0007669"/>
    <property type="project" value="UniProtKB-SubCell"/>
</dbReference>
<dbReference type="GO" id="GO:0015385">
    <property type="term" value="F:sodium:proton antiporter activity"/>
    <property type="evidence" value="ECO:0007669"/>
    <property type="project" value="InterPro"/>
</dbReference>
<dbReference type="HAMAP" id="MF_01599">
    <property type="entry name" value="NhaB"/>
    <property type="match status" value="1"/>
</dbReference>
<dbReference type="InterPro" id="IPR004671">
    <property type="entry name" value="Na+/H+_antiporter_NhaB"/>
</dbReference>
<dbReference type="NCBIfam" id="TIGR00774">
    <property type="entry name" value="NhaB"/>
    <property type="match status" value="1"/>
</dbReference>
<dbReference type="NCBIfam" id="NF007093">
    <property type="entry name" value="PRK09547.1"/>
    <property type="match status" value="1"/>
</dbReference>
<dbReference type="PANTHER" id="PTHR43302:SF1">
    <property type="entry name" value="NA(+)_H(+) ANTIPORTER NHAB"/>
    <property type="match status" value="1"/>
</dbReference>
<dbReference type="PANTHER" id="PTHR43302">
    <property type="entry name" value="TRANSPORTER ARSB-RELATED"/>
    <property type="match status" value="1"/>
</dbReference>
<dbReference type="Pfam" id="PF06450">
    <property type="entry name" value="NhaB"/>
    <property type="match status" value="1"/>
</dbReference>
<accession>A9MVW2</accession>
<keyword id="KW-0050">Antiport</keyword>
<keyword id="KW-0997">Cell inner membrane</keyword>
<keyword id="KW-1003">Cell membrane</keyword>
<keyword id="KW-0406">Ion transport</keyword>
<keyword id="KW-0472">Membrane</keyword>
<keyword id="KW-0915">Sodium</keyword>
<keyword id="KW-0739">Sodium transport</keyword>
<keyword id="KW-0812">Transmembrane</keyword>
<keyword id="KW-1133">Transmembrane helix</keyword>
<keyword id="KW-0813">Transport</keyword>
<proteinExistence type="inferred from homology"/>
<comment type="function">
    <text evidence="1">Na(+)/H(+) antiporter that extrudes sodium in exchange for external protons.</text>
</comment>
<comment type="catalytic activity">
    <reaction evidence="1">
        <text>2 Na(+)(in) + 3 H(+)(out) = 2 Na(+)(out) + 3 H(+)(in)</text>
        <dbReference type="Rhea" id="RHEA:29247"/>
        <dbReference type="ChEBI" id="CHEBI:15378"/>
        <dbReference type="ChEBI" id="CHEBI:29101"/>
    </reaction>
    <physiologicalReaction direction="left-to-right" evidence="1">
        <dbReference type="Rhea" id="RHEA:29248"/>
    </physiologicalReaction>
</comment>
<comment type="subcellular location">
    <subcellularLocation>
        <location evidence="1">Cell inner membrane</location>
        <topology evidence="1">Multi-pass membrane protein</topology>
    </subcellularLocation>
</comment>
<comment type="similarity">
    <text evidence="1">Belongs to the NhaB Na(+)/H(+) (TC 2.A.34) antiporter family.</text>
</comment>
<sequence>MEISWGRAMWRNFLGQSPDWYKLALLVFLIINPFIFLANPFIAGWLLVAEFIFTLAMALKCYPLLPGGLLAIEAVIIGMTSAAHVREEVAANLEVLLLLMFMVAGIYFMKQLLLFIFTRLLLSIRSKMVLSLAFCVAAAFLSAFLDALTVVAVVISVAVGFYGIYHRVASSRGEENDMLDDSHIDPHYKTVLEQFRGFLRSLMMHAGVGTALGGVMTMVGEPQNLIIAKAAGWHFGDFFLRMSPVTVPVLVCGLLTCMLVEKMRWFGYGETLPEKVRDVLQQFDDQSRKKRTRQDKIKLIVQAIIGVWLVTALALHLAEVGLIGLSVIILATALTGVTDEHAIGKAFTESLPFTALLTVFFSIVAVIIDQHLFAPIIQFVLQASEHAQLTLFYLFNGLLSSISDNVFVGTIYINEAKAAMENGAISLKQFELLAVAINTGTNLPSVATPNGQAAFLFLLTSALAPLIRLSYGRMVWMALPYTIVLTLIGLLCVEFTLAPATEWMTQAGWLATLS</sequence>
<reference key="1">
    <citation type="submission" date="2007-11" db="EMBL/GenBank/DDBJ databases">
        <authorList>
            <consortium name="The Salmonella enterica serovar Paratyphi B Genome Sequencing Project"/>
            <person name="McClelland M."/>
            <person name="Sanderson E.K."/>
            <person name="Porwollik S."/>
            <person name="Spieth J."/>
            <person name="Clifton W.S."/>
            <person name="Fulton R."/>
            <person name="Cordes M."/>
            <person name="Wollam A."/>
            <person name="Shah N."/>
            <person name="Pepin K."/>
            <person name="Bhonagiri V."/>
            <person name="Nash W."/>
            <person name="Johnson M."/>
            <person name="Thiruvilangam P."/>
            <person name="Wilson R."/>
        </authorList>
    </citation>
    <scope>NUCLEOTIDE SEQUENCE [LARGE SCALE GENOMIC DNA]</scope>
    <source>
        <strain>ATCC BAA-1250 / SPB7</strain>
    </source>
</reference>